<feature type="chain" id="PRO_0000099280" description="A-type inclusion protein A25 homolog">
    <location>
        <begin position="1"/>
        <end position="702"/>
    </location>
</feature>
<feature type="region of interest" description="Disordered" evidence="3">
    <location>
        <begin position="342"/>
        <end position="380"/>
    </location>
</feature>
<feature type="coiled-coil region" evidence="2">
    <location>
        <begin position="420"/>
        <end position="522"/>
    </location>
</feature>
<feature type="coiled-coil region" evidence="2">
    <location>
        <begin position="548"/>
        <end position="692"/>
    </location>
</feature>
<feature type="compositionally biased region" description="Basic and acidic residues" evidence="3">
    <location>
        <begin position="347"/>
        <end position="360"/>
    </location>
</feature>
<gene>
    <name type="ORF">A28L</name>
</gene>
<name>ATI_VAR67</name>
<proteinExistence type="inferred from homology"/>
<protein>
    <recommendedName>
        <fullName>A-type inclusion protein A25 homolog</fullName>
        <shortName>ATI</shortName>
    </recommendedName>
</protein>
<comment type="function">
    <text evidence="1">Structural protein that forms a matrix surrounding the mature virion (MV) through interaction with protein A26. Presence of protein A25 in the virion structurally prevents direct virus-cell fusion mechanism (By similarity).</text>
</comment>
<comment type="subunit">
    <text evidence="1">Interacts (via N-terminus) with protein A26.</text>
</comment>
<comment type="subcellular location">
    <subcellularLocation>
        <location>Virion</location>
    </subcellularLocation>
    <text evidence="1">Present above the membrane of mature virions (MV).</text>
</comment>
<comment type="miscellaneous">
    <text>Some orthopoxviruses such as cowpox, ectromelia, and raccoonpox viruses, form large cytoplasmic inclusions within which mature virions are embedded by a process called occlusion. In those viruses, A26 bridges mature virion with inclusion bodies through interactions with proteins A25 and A27 on the mature virion membrane. In variola virus, the protein A25 is deleted in its C-terminal region and no inclusion body is observed.</text>
</comment>
<comment type="similarity">
    <text evidence="4">Belongs to the poxviridae A25 protein family.</text>
</comment>
<reference key="1">
    <citation type="journal article" date="1991" name="Dokl. Akad. Nauk SSSR">
        <title>Creation of a clone library of fragments from the natural variola virus and study of the structural and functional organization of viral genes from a circle of hosts.</title>
        <authorList>
            <person name="Shchelkunov S.N."/>
            <person name="Marennikova S.S."/>
            <person name="Totmenin A.V."/>
            <person name="Blinov V.M."/>
            <person name="Chizhikov V.E."/>
            <person name="Gutorov V.V."/>
            <person name="Safronov P.F."/>
            <person name="Pozdnyakov S.G."/>
            <person name="Shelukhina E.M."/>
            <person name="Gashnikov P.V."/>
            <person name="Anjaparidze O.G."/>
            <person name="Sandakhchiev L.S."/>
        </authorList>
    </citation>
    <scope>NUCLEOTIDE SEQUENCE [GENOMIC DNA]</scope>
</reference>
<reference key="2">
    <citation type="journal article" date="1993" name="FEBS Lett.">
        <title>Genes of variola and vaccinia viruses necessary to overcome the host protective mechanisms.</title>
        <authorList>
            <person name="Shchelkunov S.N."/>
            <person name="Blinov V.M."/>
            <person name="Sandakhchiev L.S."/>
        </authorList>
    </citation>
    <scope>NUCLEOTIDE SEQUENCE [GENOMIC DNA]</scope>
</reference>
<keyword id="KW-0175">Coiled coil</keyword>
<keyword id="KW-1185">Reference proteome</keyword>
<keyword id="KW-0946">Virion</keyword>
<organism>
    <name type="scientific">Variola virus (isolate Human/India/Ind3/1967)</name>
    <name type="common">VARV</name>
    <name type="synonym">Smallpox virus</name>
    <dbReference type="NCBI Taxonomy" id="587200"/>
    <lineage>
        <taxon>Viruses</taxon>
        <taxon>Varidnaviria</taxon>
        <taxon>Bamfordvirae</taxon>
        <taxon>Nucleocytoviricota</taxon>
        <taxon>Pokkesviricetes</taxon>
        <taxon>Chitovirales</taxon>
        <taxon>Poxviridae</taxon>
        <taxon>Chordopoxvirinae</taxon>
        <taxon>Orthopoxvirus</taxon>
        <taxon>Variola virus</taxon>
    </lineage>
</organism>
<sequence>MEVTNLIEKCTKHSKDFATEVEKLWNDELSSESCLSRKTRNVIRNILRDITKSLTTDKKSKCFRILERSTINGEQIKDVYKTIFNNGVDAESRINTTGKYVLFTVMTYAAAELRLIKSDEIFALLSRFFNMICDIHKKYGCGNMFVGIPAALIVLLEIDHINKLFSVFSTRYDAKAYLYTEYFLFLNINHYLLSGSDLFINVAYGAVSFSSPISVPDYIMEALTFKACDHIMKSGDLIYIYAFTKKVKDLFNTKSDSIYQYVRLHEMSYDGVSEDTDDDDEVFAILNLSIDSSVDRYRNRVLLLTPEVASLRKEYSEAEPDYKYLMDEEVPAYDKHLPKPITNTGIEEPHATGGDKEDQPIKVVHPPNNDKDDAIKSYNPLEDPNYVPTITRTAIGIADYQLVINKLIEWLDKCEEECGNGGEFKTELEEAKRKLTELNAELSDKLSKIRTLERDSVYKTERIDRLTKEIKELRDIQNGTDDGSDSSEIDKKTIRELKESLDREREMRSELEKELDTIRDGKVDGSCQGRLELSRMWLKQRDDDLRAEIDKRRNVEWELSKLRRDIKECDKYKEELDKAKTTISNYVSRISTLESEIAKYQQDRDTLSAVRGELEEERRRVRDLESRLDECTHNQKDTQEVDALRSRISELENKLTDCIESGGGNLTEISRLQSRILDLERQLNDCRHNNKTNTETDRNETS</sequence>
<evidence type="ECO:0000250" key="1"/>
<evidence type="ECO:0000255" key="2"/>
<evidence type="ECO:0000256" key="3">
    <source>
        <dbReference type="SAM" id="MobiDB-lite"/>
    </source>
</evidence>
<evidence type="ECO:0000305" key="4"/>
<accession>P34011</accession>
<organismHost>
    <name type="scientific">Homo sapiens</name>
    <name type="common">Human</name>
    <dbReference type="NCBI Taxonomy" id="9606"/>
</organismHost>
<dbReference type="EMBL" id="X69198">
    <property type="protein sequence ID" value="CAA49073.1"/>
    <property type="molecule type" value="Genomic_DNA"/>
</dbReference>
<dbReference type="EMBL" id="X67115">
    <property type="protein sequence ID" value="CAA47498.1"/>
    <property type="molecule type" value="Genomic_DNA"/>
</dbReference>
<dbReference type="PIR" id="S46854">
    <property type="entry name" value="S46854"/>
</dbReference>
<dbReference type="RefSeq" id="NP_042176.1">
    <property type="nucleotide sequence ID" value="NC_001611.1"/>
</dbReference>
<dbReference type="SMR" id="P34011"/>
<dbReference type="GeneID" id="1486504"/>
<dbReference type="KEGG" id="vg:1486504"/>
<dbReference type="Proteomes" id="UP000002060">
    <property type="component" value="Segment"/>
</dbReference>
<dbReference type="GO" id="GO:0044423">
    <property type="term" value="C:virion component"/>
    <property type="evidence" value="ECO:0007669"/>
    <property type="project" value="UniProtKB-KW"/>
</dbReference>
<dbReference type="GO" id="GO:0016032">
    <property type="term" value="P:viral process"/>
    <property type="evidence" value="ECO:0007669"/>
    <property type="project" value="InterPro"/>
</dbReference>
<dbReference type="Gene3D" id="1.10.287.1490">
    <property type="match status" value="1"/>
</dbReference>
<dbReference type="InterPro" id="IPR007596">
    <property type="entry name" value="Pox_A_type_inc"/>
</dbReference>
<dbReference type="PANTHER" id="PTHR43941">
    <property type="entry name" value="STRUCTURAL MAINTENANCE OF CHROMOSOMES PROTEIN 2"/>
    <property type="match status" value="1"/>
</dbReference>
<dbReference type="PANTHER" id="PTHR43941:SF1">
    <property type="entry name" value="STRUCTURAL MAINTENANCE OF CHROMOSOMES PROTEIN 2"/>
    <property type="match status" value="1"/>
</dbReference>
<dbReference type="Pfam" id="PF04508">
    <property type="entry name" value="Pox_A_type_inc"/>
    <property type="match status" value="3"/>
</dbReference>